<evidence type="ECO:0000255" key="1">
    <source>
        <dbReference type="HAMAP-Rule" id="MF_01859"/>
    </source>
</evidence>
<comment type="function">
    <text evidence="1">Specifically methylates the guanine in position 1835 (m2G1835) of 23S rRNA.</text>
</comment>
<comment type="catalytic activity">
    <reaction evidence="1">
        <text>guanosine(1835) in 23S rRNA + S-adenosyl-L-methionine = N(2)-methylguanosine(1835) in 23S rRNA + S-adenosyl-L-homocysteine + H(+)</text>
        <dbReference type="Rhea" id="RHEA:42744"/>
        <dbReference type="Rhea" id="RHEA-COMP:10217"/>
        <dbReference type="Rhea" id="RHEA-COMP:10218"/>
        <dbReference type="ChEBI" id="CHEBI:15378"/>
        <dbReference type="ChEBI" id="CHEBI:57856"/>
        <dbReference type="ChEBI" id="CHEBI:59789"/>
        <dbReference type="ChEBI" id="CHEBI:74269"/>
        <dbReference type="ChEBI" id="CHEBI:74481"/>
        <dbReference type="EC" id="2.1.1.174"/>
    </reaction>
</comment>
<comment type="subcellular location">
    <subcellularLocation>
        <location evidence="1">Cytoplasm</location>
    </subcellularLocation>
</comment>
<comment type="similarity">
    <text evidence="1">Belongs to the methyltransferase superfamily. RlmG family.</text>
</comment>
<proteinExistence type="inferred from homology"/>
<keyword id="KW-0963">Cytoplasm</keyword>
<keyword id="KW-0489">Methyltransferase</keyword>
<keyword id="KW-0698">rRNA processing</keyword>
<keyword id="KW-0949">S-adenosyl-L-methionine</keyword>
<keyword id="KW-0808">Transferase</keyword>
<protein>
    <recommendedName>
        <fullName evidence="1">Ribosomal RNA large subunit methyltransferase G</fullName>
        <ecNumber evidence="1">2.1.1.174</ecNumber>
    </recommendedName>
    <alternativeName>
        <fullName evidence="1">23S rRNA m2G1835 methyltransferase</fullName>
    </alternativeName>
    <alternativeName>
        <fullName evidence="1">rRNA (guanine-N(2)-)-methyltransferase RlmG</fullName>
    </alternativeName>
</protein>
<name>RLMG_PSEP7</name>
<sequence length="374" mass="40466">MPLFATPFAQLDLIRQPEQDGEPLQAFDAADEYLLNHLYERGVTAQSRILVLNDAFGALAASLAPHVQLTSSGDSHLGFLALRKNLARNGLDLGSVRFVPASETAVGPFDHVLVKVPKTLALLEEQLIRLHGQLAPGAQVVAAGMVKHLPRAAGDLLERYIGPMHASLAVKKARLLVAEAAERPAPRSPYPTRYRLEQPPLTLLNHANVFCREGLDIGTRAFLPHLPRSLGALRAADLGCGNGVLGIAYALLNPQAELTLVDESYMAVQSARENWRAALGERPAAFRADDGLAGQAAGSLDLVLCNPPFHQQQVVGDFLAWRMFLQARDALAAGGELWIVGNRHLGYHAKLKRLFRGVEQVAANPKFVILKAGK</sequence>
<dbReference type="EC" id="2.1.1.174" evidence="1"/>
<dbReference type="EMBL" id="CP000744">
    <property type="protein sequence ID" value="ABR81820.1"/>
    <property type="molecule type" value="Genomic_DNA"/>
</dbReference>
<dbReference type="RefSeq" id="WP_003153074.1">
    <property type="nucleotide sequence ID" value="NC_009656.1"/>
</dbReference>
<dbReference type="SMR" id="A6VC08"/>
<dbReference type="KEGG" id="pap:PSPA7_5261"/>
<dbReference type="HOGENOM" id="CLU_040288_4_0_6"/>
<dbReference type="Proteomes" id="UP000001582">
    <property type="component" value="Chromosome"/>
</dbReference>
<dbReference type="GO" id="GO:0005737">
    <property type="term" value="C:cytoplasm"/>
    <property type="evidence" value="ECO:0007669"/>
    <property type="project" value="UniProtKB-SubCell"/>
</dbReference>
<dbReference type="GO" id="GO:0052916">
    <property type="term" value="F:23S rRNA (guanine(1835)-N(2))-methyltransferase activity"/>
    <property type="evidence" value="ECO:0007669"/>
    <property type="project" value="UniProtKB-EC"/>
</dbReference>
<dbReference type="GO" id="GO:0003676">
    <property type="term" value="F:nucleic acid binding"/>
    <property type="evidence" value="ECO:0007669"/>
    <property type="project" value="InterPro"/>
</dbReference>
<dbReference type="CDD" id="cd02440">
    <property type="entry name" value="AdoMet_MTases"/>
    <property type="match status" value="1"/>
</dbReference>
<dbReference type="Gene3D" id="3.40.50.150">
    <property type="entry name" value="Vaccinia Virus protein VP39"/>
    <property type="match status" value="2"/>
</dbReference>
<dbReference type="HAMAP" id="MF_01859">
    <property type="entry name" value="23SrRNA_methyltr_G"/>
    <property type="match status" value="1"/>
</dbReference>
<dbReference type="InterPro" id="IPR002052">
    <property type="entry name" value="DNA_methylase_N6_adenine_CS"/>
</dbReference>
<dbReference type="InterPro" id="IPR017237">
    <property type="entry name" value="rRNA_m2G-MeTrfase_RlmG"/>
</dbReference>
<dbReference type="InterPro" id="IPR046977">
    <property type="entry name" value="RsmC/RlmG"/>
</dbReference>
<dbReference type="InterPro" id="IPR029063">
    <property type="entry name" value="SAM-dependent_MTases_sf"/>
</dbReference>
<dbReference type="InterPro" id="IPR007848">
    <property type="entry name" value="Small_mtfrase_dom"/>
</dbReference>
<dbReference type="PANTHER" id="PTHR47816:SF5">
    <property type="entry name" value="RIBOSOMAL RNA LARGE SUBUNIT METHYLTRANSFERASE G"/>
    <property type="match status" value="1"/>
</dbReference>
<dbReference type="PANTHER" id="PTHR47816">
    <property type="entry name" value="RIBOSOMAL RNA SMALL SUBUNIT METHYLTRANSFERASE C"/>
    <property type="match status" value="1"/>
</dbReference>
<dbReference type="Pfam" id="PF05175">
    <property type="entry name" value="MTS"/>
    <property type="match status" value="1"/>
</dbReference>
<dbReference type="PIRSF" id="PIRSF037565">
    <property type="entry name" value="RRNA_m2G_Mtase_RsmD_prd"/>
    <property type="match status" value="1"/>
</dbReference>
<dbReference type="SUPFAM" id="SSF53335">
    <property type="entry name" value="S-adenosyl-L-methionine-dependent methyltransferases"/>
    <property type="match status" value="1"/>
</dbReference>
<organism>
    <name type="scientific">Pseudomonas paraeruginosa (strain DSM 24068 / PA7)</name>
    <name type="common">Pseudomonas aeruginosa (strain PA7)</name>
    <dbReference type="NCBI Taxonomy" id="381754"/>
    <lineage>
        <taxon>Bacteria</taxon>
        <taxon>Pseudomonadati</taxon>
        <taxon>Pseudomonadota</taxon>
        <taxon>Gammaproteobacteria</taxon>
        <taxon>Pseudomonadales</taxon>
        <taxon>Pseudomonadaceae</taxon>
        <taxon>Pseudomonas</taxon>
        <taxon>Pseudomonas paraeruginosa</taxon>
    </lineage>
</organism>
<gene>
    <name evidence="1" type="primary">rlmG</name>
    <name type="ordered locus">PSPA7_5261</name>
</gene>
<accession>A6VC08</accession>
<reference key="1">
    <citation type="submission" date="2007-06" db="EMBL/GenBank/DDBJ databases">
        <authorList>
            <person name="Dodson R.J."/>
            <person name="Harkins D."/>
            <person name="Paulsen I.T."/>
        </authorList>
    </citation>
    <scope>NUCLEOTIDE SEQUENCE [LARGE SCALE GENOMIC DNA]</scope>
    <source>
        <strain>DSM 24068 / PA7</strain>
    </source>
</reference>
<feature type="chain" id="PRO_0000366473" description="Ribosomal RNA large subunit methyltransferase G">
    <location>
        <begin position="1"/>
        <end position="374"/>
    </location>
</feature>